<protein>
    <recommendedName>
        <fullName evidence="1">Aspartate 1-decarboxylase</fullName>
        <ecNumber evidence="1">4.1.1.11</ecNumber>
    </recommendedName>
    <alternativeName>
        <fullName evidence="1">Aspartate alpha-decarboxylase</fullName>
    </alternativeName>
    <component>
        <recommendedName>
            <fullName evidence="1">Aspartate 1-decarboxylase beta chain</fullName>
        </recommendedName>
    </component>
    <component>
        <recommendedName>
            <fullName evidence="1">Aspartate 1-decarboxylase alpha chain</fullName>
        </recommendedName>
    </component>
</protein>
<evidence type="ECO:0000255" key="1">
    <source>
        <dbReference type="HAMAP-Rule" id="MF_00446"/>
    </source>
</evidence>
<reference key="1">
    <citation type="journal article" date="2003" name="Nat. Genet.">
        <title>Comparative analysis of the genome sequences of Bordetella pertussis, Bordetella parapertussis and Bordetella bronchiseptica.</title>
        <authorList>
            <person name="Parkhill J."/>
            <person name="Sebaihia M."/>
            <person name="Preston A."/>
            <person name="Murphy L.D."/>
            <person name="Thomson N.R."/>
            <person name="Harris D.E."/>
            <person name="Holden M.T.G."/>
            <person name="Churcher C.M."/>
            <person name="Bentley S.D."/>
            <person name="Mungall K.L."/>
            <person name="Cerdeno-Tarraga A.-M."/>
            <person name="Temple L."/>
            <person name="James K.D."/>
            <person name="Harris B."/>
            <person name="Quail M.A."/>
            <person name="Achtman M."/>
            <person name="Atkin R."/>
            <person name="Baker S."/>
            <person name="Basham D."/>
            <person name="Bason N."/>
            <person name="Cherevach I."/>
            <person name="Chillingworth T."/>
            <person name="Collins M."/>
            <person name="Cronin A."/>
            <person name="Davis P."/>
            <person name="Doggett J."/>
            <person name="Feltwell T."/>
            <person name="Goble A."/>
            <person name="Hamlin N."/>
            <person name="Hauser H."/>
            <person name="Holroyd S."/>
            <person name="Jagels K."/>
            <person name="Leather S."/>
            <person name="Moule S."/>
            <person name="Norberczak H."/>
            <person name="O'Neil S."/>
            <person name="Ormond D."/>
            <person name="Price C."/>
            <person name="Rabbinowitsch E."/>
            <person name="Rutter S."/>
            <person name="Sanders M."/>
            <person name="Saunders D."/>
            <person name="Seeger K."/>
            <person name="Sharp S."/>
            <person name="Simmonds M."/>
            <person name="Skelton J."/>
            <person name="Squares R."/>
            <person name="Squares S."/>
            <person name="Stevens K."/>
            <person name="Unwin L."/>
            <person name="Whitehead S."/>
            <person name="Barrell B.G."/>
            <person name="Maskell D.J."/>
        </authorList>
    </citation>
    <scope>NUCLEOTIDE SEQUENCE [LARGE SCALE GENOMIC DNA]</scope>
    <source>
        <strain>Tohama I / ATCC BAA-589 / NCTC 13251</strain>
    </source>
</reference>
<gene>
    <name evidence="1" type="primary">panD</name>
    <name type="ordered locus">BP1816</name>
</gene>
<organism>
    <name type="scientific">Bordetella pertussis (strain Tohama I / ATCC BAA-589 / NCTC 13251)</name>
    <dbReference type="NCBI Taxonomy" id="257313"/>
    <lineage>
        <taxon>Bacteria</taxon>
        <taxon>Pseudomonadati</taxon>
        <taxon>Pseudomonadota</taxon>
        <taxon>Betaproteobacteria</taxon>
        <taxon>Burkholderiales</taxon>
        <taxon>Alcaligenaceae</taxon>
        <taxon>Bordetella</taxon>
    </lineage>
</organism>
<dbReference type="EC" id="4.1.1.11" evidence="1"/>
<dbReference type="EMBL" id="BX640416">
    <property type="protein sequence ID" value="CAE42102.1"/>
    <property type="molecule type" value="Genomic_DNA"/>
</dbReference>
<dbReference type="RefSeq" id="NP_880521.1">
    <property type="nucleotide sequence ID" value="NC_002929.2"/>
</dbReference>
<dbReference type="RefSeq" id="WP_003818672.1">
    <property type="nucleotide sequence ID" value="NZ_CP039022.1"/>
</dbReference>
<dbReference type="SMR" id="Q7VXF8"/>
<dbReference type="STRING" id="257313.BP1816"/>
<dbReference type="PaxDb" id="257313-BP1816"/>
<dbReference type="GeneID" id="69602008"/>
<dbReference type="KEGG" id="bpe:BP1816"/>
<dbReference type="PATRIC" id="fig|257313.5.peg.1953"/>
<dbReference type="eggNOG" id="COG0853">
    <property type="taxonomic scope" value="Bacteria"/>
</dbReference>
<dbReference type="HOGENOM" id="CLU_115305_2_1_4"/>
<dbReference type="BRENDA" id="4.1.1.11">
    <property type="organism ID" value="899"/>
</dbReference>
<dbReference type="UniPathway" id="UPA00028">
    <property type="reaction ID" value="UER00002"/>
</dbReference>
<dbReference type="Proteomes" id="UP000002676">
    <property type="component" value="Chromosome"/>
</dbReference>
<dbReference type="GO" id="GO:0005829">
    <property type="term" value="C:cytosol"/>
    <property type="evidence" value="ECO:0007669"/>
    <property type="project" value="TreeGrafter"/>
</dbReference>
<dbReference type="GO" id="GO:0004068">
    <property type="term" value="F:aspartate 1-decarboxylase activity"/>
    <property type="evidence" value="ECO:0007669"/>
    <property type="project" value="UniProtKB-UniRule"/>
</dbReference>
<dbReference type="GO" id="GO:0006523">
    <property type="term" value="P:alanine biosynthetic process"/>
    <property type="evidence" value="ECO:0007669"/>
    <property type="project" value="InterPro"/>
</dbReference>
<dbReference type="GO" id="GO:0015940">
    <property type="term" value="P:pantothenate biosynthetic process"/>
    <property type="evidence" value="ECO:0007669"/>
    <property type="project" value="UniProtKB-UniRule"/>
</dbReference>
<dbReference type="CDD" id="cd06919">
    <property type="entry name" value="Asp_decarbox"/>
    <property type="match status" value="1"/>
</dbReference>
<dbReference type="Gene3D" id="2.40.40.20">
    <property type="match status" value="1"/>
</dbReference>
<dbReference type="HAMAP" id="MF_00446">
    <property type="entry name" value="PanD"/>
    <property type="match status" value="1"/>
</dbReference>
<dbReference type="InterPro" id="IPR009010">
    <property type="entry name" value="Asp_de-COase-like_dom_sf"/>
</dbReference>
<dbReference type="InterPro" id="IPR003190">
    <property type="entry name" value="Asp_decarbox"/>
</dbReference>
<dbReference type="NCBIfam" id="TIGR00223">
    <property type="entry name" value="panD"/>
    <property type="match status" value="1"/>
</dbReference>
<dbReference type="PANTHER" id="PTHR21012">
    <property type="entry name" value="ASPARTATE 1-DECARBOXYLASE"/>
    <property type="match status" value="1"/>
</dbReference>
<dbReference type="PANTHER" id="PTHR21012:SF0">
    <property type="entry name" value="ASPARTATE 1-DECARBOXYLASE"/>
    <property type="match status" value="1"/>
</dbReference>
<dbReference type="Pfam" id="PF02261">
    <property type="entry name" value="Asp_decarbox"/>
    <property type="match status" value="1"/>
</dbReference>
<dbReference type="PIRSF" id="PIRSF006246">
    <property type="entry name" value="Asp_decarbox"/>
    <property type="match status" value="1"/>
</dbReference>
<dbReference type="SUPFAM" id="SSF50692">
    <property type="entry name" value="ADC-like"/>
    <property type="match status" value="1"/>
</dbReference>
<feature type="chain" id="PRO_0000023045" description="Aspartate 1-decarboxylase beta chain" evidence="1">
    <location>
        <begin position="1"/>
        <end position="24"/>
    </location>
</feature>
<feature type="chain" id="PRO_0000023046" description="Aspartate 1-decarboxylase alpha chain" evidence="1">
    <location>
        <begin position="25"/>
        <end position="122"/>
    </location>
</feature>
<feature type="active site" description="Schiff-base intermediate with substrate; via pyruvic acid" evidence="1">
    <location>
        <position position="25"/>
    </location>
</feature>
<feature type="active site" description="Proton donor" evidence="1">
    <location>
        <position position="58"/>
    </location>
</feature>
<feature type="binding site" evidence="1">
    <location>
        <position position="57"/>
    </location>
    <ligand>
        <name>substrate</name>
    </ligand>
</feature>
<feature type="binding site" evidence="1">
    <location>
        <begin position="73"/>
        <end position="75"/>
    </location>
    <ligand>
        <name>substrate</name>
    </ligand>
</feature>
<feature type="modified residue" description="Pyruvic acid (Ser)" evidence="1">
    <location>
        <position position="25"/>
    </location>
</feature>
<comment type="function">
    <text evidence="1">Catalyzes the pyruvoyl-dependent decarboxylation of aspartate to produce beta-alanine.</text>
</comment>
<comment type="catalytic activity">
    <reaction evidence="1">
        <text>L-aspartate + H(+) = beta-alanine + CO2</text>
        <dbReference type="Rhea" id="RHEA:19497"/>
        <dbReference type="ChEBI" id="CHEBI:15378"/>
        <dbReference type="ChEBI" id="CHEBI:16526"/>
        <dbReference type="ChEBI" id="CHEBI:29991"/>
        <dbReference type="ChEBI" id="CHEBI:57966"/>
        <dbReference type="EC" id="4.1.1.11"/>
    </reaction>
</comment>
<comment type="cofactor">
    <cofactor evidence="1">
        <name>pyruvate</name>
        <dbReference type="ChEBI" id="CHEBI:15361"/>
    </cofactor>
    <text evidence="1">Binds 1 pyruvoyl group covalently per subunit.</text>
</comment>
<comment type="pathway">
    <text evidence="1">Cofactor biosynthesis; (R)-pantothenate biosynthesis; beta-alanine from L-aspartate: step 1/1.</text>
</comment>
<comment type="subunit">
    <text evidence="1">Heterooctamer of four alpha and four beta subunits.</text>
</comment>
<comment type="subcellular location">
    <subcellularLocation>
        <location evidence="1">Cytoplasm</location>
    </subcellularLocation>
</comment>
<comment type="PTM">
    <text evidence="1">Is synthesized initially as an inactive proenzyme, which is activated by self-cleavage at a specific serine bond to produce a beta-subunit with a hydroxyl group at its C-terminus and an alpha-subunit with a pyruvoyl group at its N-terminus.</text>
</comment>
<comment type="similarity">
    <text evidence="1">Belongs to the PanD family.</text>
</comment>
<keyword id="KW-0068">Autocatalytic cleavage</keyword>
<keyword id="KW-0963">Cytoplasm</keyword>
<keyword id="KW-0210">Decarboxylase</keyword>
<keyword id="KW-0456">Lyase</keyword>
<keyword id="KW-0566">Pantothenate biosynthesis</keyword>
<keyword id="KW-0670">Pyruvate</keyword>
<keyword id="KW-1185">Reference proteome</keyword>
<keyword id="KW-0704">Schiff base</keyword>
<keyword id="KW-0865">Zymogen</keyword>
<accession>Q7VXF8</accession>
<proteinExistence type="inferred from homology"/>
<name>PAND_BORPE</name>
<sequence>MQRIMLRAKLHRVTVTEADLHYEGSCGIDEDLLDAAGMREFERIELYNVTNGERFDTYIIKAARGSGAISLNGAAARRAQVGDLLIICTYGPMSEEQSAAHKPQVVLVDDANRVKEIRKFPA</sequence>